<reference key="1">
    <citation type="journal article" date="2002" name="Proc. Natl. Acad. Sci. U.S.A.">
        <title>Complete genome sequence of Clostridium perfringens, an anaerobic flesh-eater.</title>
        <authorList>
            <person name="Shimizu T."/>
            <person name="Ohtani K."/>
            <person name="Hirakawa H."/>
            <person name="Ohshima K."/>
            <person name="Yamashita A."/>
            <person name="Shiba T."/>
            <person name="Ogasawara N."/>
            <person name="Hattori M."/>
            <person name="Kuhara S."/>
            <person name="Hayashi H."/>
        </authorList>
    </citation>
    <scope>NUCLEOTIDE SEQUENCE [LARGE SCALE GENOMIC DNA]</scope>
    <source>
        <strain>13 / Type A</strain>
    </source>
</reference>
<comment type="function">
    <text evidence="1">Specifically methylates the pseudouridine at position 1915 (m3Psi1915) in 23S rRNA.</text>
</comment>
<comment type="catalytic activity">
    <reaction evidence="1">
        <text>pseudouridine(1915) in 23S rRNA + S-adenosyl-L-methionine = N(3)-methylpseudouridine(1915) in 23S rRNA + S-adenosyl-L-homocysteine + H(+)</text>
        <dbReference type="Rhea" id="RHEA:42752"/>
        <dbReference type="Rhea" id="RHEA-COMP:10221"/>
        <dbReference type="Rhea" id="RHEA-COMP:10222"/>
        <dbReference type="ChEBI" id="CHEBI:15378"/>
        <dbReference type="ChEBI" id="CHEBI:57856"/>
        <dbReference type="ChEBI" id="CHEBI:59789"/>
        <dbReference type="ChEBI" id="CHEBI:65314"/>
        <dbReference type="ChEBI" id="CHEBI:74486"/>
        <dbReference type="EC" id="2.1.1.177"/>
    </reaction>
</comment>
<comment type="subunit">
    <text evidence="1">Homodimer.</text>
</comment>
<comment type="subcellular location">
    <subcellularLocation>
        <location evidence="1">Cytoplasm</location>
    </subcellularLocation>
</comment>
<comment type="similarity">
    <text evidence="1">Belongs to the RNA methyltransferase RlmH family.</text>
</comment>
<dbReference type="EC" id="2.1.1.177" evidence="1"/>
<dbReference type="EMBL" id="BA000016">
    <property type="protein sequence ID" value="BAB82306.1"/>
    <property type="molecule type" value="Genomic_DNA"/>
</dbReference>
<dbReference type="RefSeq" id="WP_003456814.1">
    <property type="nucleotide sequence ID" value="NC_003366.1"/>
</dbReference>
<dbReference type="SMR" id="Q8XH85"/>
<dbReference type="STRING" id="195102.gene:10491934"/>
<dbReference type="GeneID" id="93000794"/>
<dbReference type="KEGG" id="cpe:CPE2600"/>
<dbReference type="HOGENOM" id="CLU_100552_0_0_9"/>
<dbReference type="Proteomes" id="UP000000818">
    <property type="component" value="Chromosome"/>
</dbReference>
<dbReference type="GO" id="GO:0005737">
    <property type="term" value="C:cytoplasm"/>
    <property type="evidence" value="ECO:0007669"/>
    <property type="project" value="UniProtKB-SubCell"/>
</dbReference>
<dbReference type="GO" id="GO:0070038">
    <property type="term" value="F:rRNA (pseudouridine-N3-)-methyltransferase activity"/>
    <property type="evidence" value="ECO:0007669"/>
    <property type="project" value="UniProtKB-UniRule"/>
</dbReference>
<dbReference type="CDD" id="cd18081">
    <property type="entry name" value="RlmH-like"/>
    <property type="match status" value="1"/>
</dbReference>
<dbReference type="Gene3D" id="3.40.1280.10">
    <property type="match status" value="1"/>
</dbReference>
<dbReference type="HAMAP" id="MF_00658">
    <property type="entry name" value="23SrRNA_methyltr_H"/>
    <property type="match status" value="1"/>
</dbReference>
<dbReference type="InterPro" id="IPR029028">
    <property type="entry name" value="Alpha/beta_knot_MTases"/>
</dbReference>
<dbReference type="InterPro" id="IPR003742">
    <property type="entry name" value="RlmH-like"/>
</dbReference>
<dbReference type="InterPro" id="IPR029026">
    <property type="entry name" value="tRNA_m1G_MTases_N"/>
</dbReference>
<dbReference type="NCBIfam" id="NF000985">
    <property type="entry name" value="PRK00103.1-3"/>
    <property type="match status" value="1"/>
</dbReference>
<dbReference type="NCBIfam" id="TIGR00246">
    <property type="entry name" value="tRNA_RlmH_YbeA"/>
    <property type="match status" value="1"/>
</dbReference>
<dbReference type="PANTHER" id="PTHR33603">
    <property type="entry name" value="METHYLTRANSFERASE"/>
    <property type="match status" value="1"/>
</dbReference>
<dbReference type="PANTHER" id="PTHR33603:SF1">
    <property type="entry name" value="RIBOSOMAL RNA LARGE SUBUNIT METHYLTRANSFERASE H"/>
    <property type="match status" value="1"/>
</dbReference>
<dbReference type="Pfam" id="PF02590">
    <property type="entry name" value="SPOUT_MTase"/>
    <property type="match status" value="1"/>
</dbReference>
<dbReference type="PIRSF" id="PIRSF004505">
    <property type="entry name" value="MT_bac"/>
    <property type="match status" value="1"/>
</dbReference>
<dbReference type="SUPFAM" id="SSF75217">
    <property type="entry name" value="alpha/beta knot"/>
    <property type="match status" value="1"/>
</dbReference>
<sequence length="159" mass="18473">MNITVISVGKLKEKYLKQAIDEYSKRLSRYCKLEIIELPDEKTPDNASEKEELQIKEKEGKLILSKIKDNMHVIAMDLKGNEITSEKFSKYIENCGVMGNSNITFVIGGSLGLSQEVIKRADYKLCFSKMTFPHQLFRVMLLEQVYRAFRIMKNEPYHK</sequence>
<protein>
    <recommendedName>
        <fullName evidence="1">Ribosomal RNA large subunit methyltransferase H</fullName>
        <ecNumber evidence="1">2.1.1.177</ecNumber>
    </recommendedName>
    <alternativeName>
        <fullName evidence="1">23S rRNA (pseudouridine1915-N3)-methyltransferase</fullName>
    </alternativeName>
    <alternativeName>
        <fullName evidence="1">23S rRNA m3Psi1915 methyltransferase</fullName>
    </alternativeName>
    <alternativeName>
        <fullName evidence="1">rRNA (pseudouridine-N3-)-methyltransferase RlmH</fullName>
    </alternativeName>
</protein>
<feature type="chain" id="PRO_0000198109" description="Ribosomal RNA large subunit methyltransferase H">
    <location>
        <begin position="1"/>
        <end position="159"/>
    </location>
</feature>
<feature type="binding site" evidence="1">
    <location>
        <position position="108"/>
    </location>
    <ligand>
        <name>S-adenosyl-L-methionine</name>
        <dbReference type="ChEBI" id="CHEBI:59789"/>
    </ligand>
</feature>
<feature type="binding site" evidence="1">
    <location>
        <begin position="127"/>
        <end position="132"/>
    </location>
    <ligand>
        <name>S-adenosyl-L-methionine</name>
        <dbReference type="ChEBI" id="CHEBI:59789"/>
    </ligand>
</feature>
<evidence type="ECO:0000255" key="1">
    <source>
        <dbReference type="HAMAP-Rule" id="MF_00658"/>
    </source>
</evidence>
<gene>
    <name evidence="1" type="primary">rlmH</name>
    <name type="ordered locus">CPE2600</name>
</gene>
<proteinExistence type="inferred from homology"/>
<organism>
    <name type="scientific">Clostridium perfringens (strain 13 / Type A)</name>
    <dbReference type="NCBI Taxonomy" id="195102"/>
    <lineage>
        <taxon>Bacteria</taxon>
        <taxon>Bacillati</taxon>
        <taxon>Bacillota</taxon>
        <taxon>Clostridia</taxon>
        <taxon>Eubacteriales</taxon>
        <taxon>Clostridiaceae</taxon>
        <taxon>Clostridium</taxon>
    </lineage>
</organism>
<accession>Q8XH85</accession>
<name>RLMH_CLOPE</name>
<keyword id="KW-0963">Cytoplasm</keyword>
<keyword id="KW-0489">Methyltransferase</keyword>
<keyword id="KW-1185">Reference proteome</keyword>
<keyword id="KW-0698">rRNA processing</keyword>
<keyword id="KW-0949">S-adenosyl-L-methionine</keyword>
<keyword id="KW-0808">Transferase</keyword>